<dbReference type="EC" id="3.4.24.-" evidence="1"/>
<dbReference type="EMBL" id="U38804">
    <property type="protein sequence ID" value="AAC08213.1"/>
    <property type="molecule type" value="Genomic_DNA"/>
</dbReference>
<dbReference type="PIR" id="S73248">
    <property type="entry name" value="S73248"/>
</dbReference>
<dbReference type="RefSeq" id="NP_053937.1">
    <property type="nucleotide sequence ID" value="NC_000925.1"/>
</dbReference>
<dbReference type="SMR" id="P51327"/>
<dbReference type="MEROPS" id="M41.017"/>
<dbReference type="GeneID" id="809956"/>
<dbReference type="GO" id="GO:0009535">
    <property type="term" value="C:chloroplast thylakoid membrane"/>
    <property type="evidence" value="ECO:0007669"/>
    <property type="project" value="UniProtKB-SubCell"/>
</dbReference>
<dbReference type="GO" id="GO:0005524">
    <property type="term" value="F:ATP binding"/>
    <property type="evidence" value="ECO:0007669"/>
    <property type="project" value="UniProtKB-UniRule"/>
</dbReference>
<dbReference type="GO" id="GO:0016887">
    <property type="term" value="F:ATP hydrolysis activity"/>
    <property type="evidence" value="ECO:0007669"/>
    <property type="project" value="UniProtKB-UniRule"/>
</dbReference>
<dbReference type="GO" id="GO:0004176">
    <property type="term" value="F:ATP-dependent peptidase activity"/>
    <property type="evidence" value="ECO:0007669"/>
    <property type="project" value="InterPro"/>
</dbReference>
<dbReference type="GO" id="GO:0004222">
    <property type="term" value="F:metalloendopeptidase activity"/>
    <property type="evidence" value="ECO:0007669"/>
    <property type="project" value="InterPro"/>
</dbReference>
<dbReference type="GO" id="GO:0008270">
    <property type="term" value="F:zinc ion binding"/>
    <property type="evidence" value="ECO:0007669"/>
    <property type="project" value="UniProtKB-UniRule"/>
</dbReference>
<dbReference type="GO" id="GO:0030163">
    <property type="term" value="P:protein catabolic process"/>
    <property type="evidence" value="ECO:0007669"/>
    <property type="project" value="UniProtKB-UniRule"/>
</dbReference>
<dbReference type="GO" id="GO:0006508">
    <property type="term" value="P:proteolysis"/>
    <property type="evidence" value="ECO:0007669"/>
    <property type="project" value="UniProtKB-KW"/>
</dbReference>
<dbReference type="CDD" id="cd19501">
    <property type="entry name" value="RecA-like_FtsH"/>
    <property type="match status" value="1"/>
</dbReference>
<dbReference type="FunFam" id="1.10.8.60:FF:000001">
    <property type="entry name" value="ATP-dependent zinc metalloprotease FtsH"/>
    <property type="match status" value="1"/>
</dbReference>
<dbReference type="FunFam" id="1.20.58.760:FF:000001">
    <property type="entry name" value="ATP-dependent zinc metalloprotease FtsH"/>
    <property type="match status" value="1"/>
</dbReference>
<dbReference type="FunFam" id="3.40.50.300:FF:000001">
    <property type="entry name" value="ATP-dependent zinc metalloprotease FtsH"/>
    <property type="match status" value="1"/>
</dbReference>
<dbReference type="Gene3D" id="1.10.8.60">
    <property type="match status" value="1"/>
</dbReference>
<dbReference type="Gene3D" id="3.30.720.210">
    <property type="match status" value="1"/>
</dbReference>
<dbReference type="Gene3D" id="3.40.50.300">
    <property type="entry name" value="P-loop containing nucleotide triphosphate hydrolases"/>
    <property type="match status" value="1"/>
</dbReference>
<dbReference type="Gene3D" id="1.20.58.760">
    <property type="entry name" value="Peptidase M41"/>
    <property type="match status" value="1"/>
</dbReference>
<dbReference type="HAMAP" id="MF_01458">
    <property type="entry name" value="FtsH"/>
    <property type="match status" value="1"/>
</dbReference>
<dbReference type="InterPro" id="IPR003593">
    <property type="entry name" value="AAA+_ATPase"/>
</dbReference>
<dbReference type="InterPro" id="IPR041569">
    <property type="entry name" value="AAA_lid_3"/>
</dbReference>
<dbReference type="InterPro" id="IPR003959">
    <property type="entry name" value="ATPase_AAA_core"/>
</dbReference>
<dbReference type="InterPro" id="IPR003960">
    <property type="entry name" value="ATPase_AAA_CS"/>
</dbReference>
<dbReference type="InterPro" id="IPR005936">
    <property type="entry name" value="FtsH"/>
</dbReference>
<dbReference type="InterPro" id="IPR027417">
    <property type="entry name" value="P-loop_NTPase"/>
</dbReference>
<dbReference type="InterPro" id="IPR011546">
    <property type="entry name" value="Pept_M41_FtsH_extracell"/>
</dbReference>
<dbReference type="InterPro" id="IPR000642">
    <property type="entry name" value="Peptidase_M41"/>
</dbReference>
<dbReference type="InterPro" id="IPR037219">
    <property type="entry name" value="Peptidase_M41-like"/>
</dbReference>
<dbReference type="NCBIfam" id="TIGR01241">
    <property type="entry name" value="FtsH_fam"/>
    <property type="match status" value="1"/>
</dbReference>
<dbReference type="PANTHER" id="PTHR23076:SF139">
    <property type="entry name" value="ATP-DEPENDENT ZINC METALLOPROTEASE FTSH 2, CHLOROPLASTIC"/>
    <property type="match status" value="1"/>
</dbReference>
<dbReference type="PANTHER" id="PTHR23076">
    <property type="entry name" value="METALLOPROTEASE M41 FTSH"/>
    <property type="match status" value="1"/>
</dbReference>
<dbReference type="Pfam" id="PF00004">
    <property type="entry name" value="AAA"/>
    <property type="match status" value="1"/>
</dbReference>
<dbReference type="Pfam" id="PF17862">
    <property type="entry name" value="AAA_lid_3"/>
    <property type="match status" value="1"/>
</dbReference>
<dbReference type="Pfam" id="PF06480">
    <property type="entry name" value="FtsH_ext"/>
    <property type="match status" value="1"/>
</dbReference>
<dbReference type="Pfam" id="PF01434">
    <property type="entry name" value="Peptidase_M41"/>
    <property type="match status" value="1"/>
</dbReference>
<dbReference type="SMART" id="SM00382">
    <property type="entry name" value="AAA"/>
    <property type="match status" value="1"/>
</dbReference>
<dbReference type="SUPFAM" id="SSF140990">
    <property type="entry name" value="FtsH protease domain-like"/>
    <property type="match status" value="1"/>
</dbReference>
<dbReference type="SUPFAM" id="SSF52540">
    <property type="entry name" value="P-loop containing nucleoside triphosphate hydrolases"/>
    <property type="match status" value="1"/>
</dbReference>
<dbReference type="PROSITE" id="PS00674">
    <property type="entry name" value="AAA"/>
    <property type="match status" value="1"/>
</dbReference>
<comment type="function">
    <text evidence="1">Acts as a processive, ATP-dependent zinc metallopeptidase.</text>
</comment>
<comment type="cofactor">
    <cofactor evidence="1">
        <name>Zn(2+)</name>
        <dbReference type="ChEBI" id="CHEBI:29105"/>
    </cofactor>
    <text evidence="1">Binds 1 zinc ion per subunit.</text>
</comment>
<comment type="subunit">
    <text evidence="1">Homohexamer.</text>
</comment>
<comment type="subcellular location">
    <subcellularLocation>
        <location evidence="1">Plastid</location>
        <location evidence="1">Chloroplast thylakoid membrane</location>
        <topology evidence="1">Multi-pass membrane protein</topology>
        <orientation evidence="1">Stromal side</orientation>
    </subcellularLocation>
</comment>
<comment type="similarity">
    <text evidence="1">In the central section; belongs to the AAA ATPase family.</text>
</comment>
<comment type="similarity">
    <text evidence="1">In the C-terminal section; belongs to the peptidase M41 family.</text>
</comment>
<keyword id="KW-0067">ATP-binding</keyword>
<keyword id="KW-0150">Chloroplast</keyword>
<keyword id="KW-0378">Hydrolase</keyword>
<keyword id="KW-0472">Membrane</keyword>
<keyword id="KW-0479">Metal-binding</keyword>
<keyword id="KW-0482">Metalloprotease</keyword>
<keyword id="KW-0547">Nucleotide-binding</keyword>
<keyword id="KW-0934">Plastid</keyword>
<keyword id="KW-0645">Protease</keyword>
<keyword id="KW-0793">Thylakoid</keyword>
<keyword id="KW-0812">Transmembrane</keyword>
<keyword id="KW-1133">Transmembrane helix</keyword>
<keyword id="KW-0862">Zinc</keyword>
<proteinExistence type="inferred from homology"/>
<gene>
    <name evidence="1" type="primary">ftsH</name>
    <name type="synonym">ycf25</name>
</gene>
<name>FTSH_PORPU</name>
<feature type="chain" id="PRO_0000084661" description="ATP-dependent zinc metalloprotease FtsH">
    <location>
        <begin position="1"/>
        <end position="628"/>
    </location>
</feature>
<feature type="topological domain" description="Stromal" evidence="1">
    <location>
        <begin position="1"/>
        <end position="7"/>
    </location>
</feature>
<feature type="transmembrane region" description="Helical" evidence="1">
    <location>
        <begin position="8"/>
        <end position="28"/>
    </location>
</feature>
<feature type="topological domain" description="Lumenal" evidence="1">
    <location>
        <begin position="29"/>
        <end position="118"/>
    </location>
</feature>
<feature type="transmembrane region" description="Helical" evidence="1">
    <location>
        <begin position="119"/>
        <end position="139"/>
    </location>
</feature>
<feature type="topological domain" description="Stromal" evidence="1">
    <location>
        <begin position="140"/>
        <end position="628"/>
    </location>
</feature>
<feature type="active site" evidence="1">
    <location>
        <position position="435"/>
    </location>
</feature>
<feature type="binding site" evidence="1">
    <location>
        <begin position="213"/>
        <end position="220"/>
    </location>
    <ligand>
        <name>ATP</name>
        <dbReference type="ChEBI" id="CHEBI:30616"/>
    </ligand>
</feature>
<feature type="binding site" evidence="1">
    <location>
        <position position="434"/>
    </location>
    <ligand>
        <name>Zn(2+)</name>
        <dbReference type="ChEBI" id="CHEBI:29105"/>
        <note>catalytic</note>
    </ligand>
</feature>
<feature type="binding site" evidence="1">
    <location>
        <position position="438"/>
    </location>
    <ligand>
        <name>Zn(2+)</name>
        <dbReference type="ChEBI" id="CHEBI:29105"/>
        <note>catalytic</note>
    </ligand>
</feature>
<feature type="binding site" evidence="1">
    <location>
        <position position="512"/>
    </location>
    <ligand>
        <name>Zn(2+)</name>
        <dbReference type="ChEBI" id="CHEBI:29105"/>
        <note>catalytic</note>
    </ligand>
</feature>
<organism>
    <name type="scientific">Porphyra purpurea</name>
    <name type="common">Red seaweed</name>
    <name type="synonym">Ulva purpurea</name>
    <dbReference type="NCBI Taxonomy" id="2787"/>
    <lineage>
        <taxon>Eukaryota</taxon>
        <taxon>Rhodophyta</taxon>
        <taxon>Bangiophyceae</taxon>
        <taxon>Bangiales</taxon>
        <taxon>Bangiaceae</taxon>
        <taxon>Porphyra</taxon>
    </lineage>
</organism>
<evidence type="ECO:0000255" key="1">
    <source>
        <dbReference type="HAMAP-Rule" id="MF_01458"/>
    </source>
</evidence>
<geneLocation type="chloroplast"/>
<accession>P51327</accession>
<protein>
    <recommendedName>
        <fullName evidence="1">ATP-dependent zinc metalloprotease FtsH</fullName>
        <ecNumber evidence="1">3.4.24.-</ecNumber>
    </recommendedName>
</protein>
<sequence length="628" mass="68495">MKLSWKTLLLWSLPIFVVGFFFWQGFLGPTTTDVGSNIASSRMTYGRFLEYLDMGWVKRVDLYENNHTAIVEAVGPELGNRVQRIRVELPASAPELITKLRKANVDLDAHPPKSTSAVWGLLGNLLFPLILVGGLAFLFRRSNNASGGPGQAMSFGKSKALFQMEAKTGVVFNDVAGVEEAKEEFQEVVTFLKQPESFTAVGAKIPKGVLLVGPPGTGKTLLAKAIAGEAGVPFFSISGSEFVEMFVGVGASRVRDLFKKAKDNAPCIVFIDEIDAVGRQRGTGVGGGNDEREQTLNQLLTEMDGFEGNTGVIVIAATNRADILDSALLRPGRFDRQVSVDVPDFRGRLAILEVHAKNKKMESKVSLETIARRTPGFSGADLANLLNEAAILTARRRKSAMTMSEIDTSIDRVVAGLEGTPLIDSKSKRLIAYHEVGHAIIGSLLEHHDPVQKVTLIPRGQARGLTWFTPSDDQSLISRSQILARIVGALGGRAAEEIIFGDAEVTTGASNDLQQVTSMARQMVTRFGMSKIGPLSLESQGSDPFLGRGMGGGSEYSDEVATNIDKQVREIVSECYKEAKKIVKDNRVVMDRLVDLLIEKETIEGNEFRHIVKEYTAIPEKNYYISQF</sequence>
<reference key="1">
    <citation type="journal article" date="1995" name="Plant Mol. Biol. Rep.">
        <title>Complete nucleotide sequence of the Porphyra purpurea chloroplast genome.</title>
        <authorList>
            <person name="Reith M.E."/>
            <person name="Munholland J."/>
        </authorList>
    </citation>
    <scope>NUCLEOTIDE SEQUENCE [LARGE SCALE GENOMIC DNA]</scope>
    <source>
        <strain>Avonport</strain>
    </source>
</reference>